<feature type="chain" id="PRO_0000093944" description="RNA polymerase sigma-F factor">
    <location>
        <begin position="1"/>
        <end position="255"/>
    </location>
</feature>
<feature type="DNA-binding region" description="H-T-H motif" evidence="1">
    <location>
        <begin position="221"/>
        <end position="240"/>
    </location>
</feature>
<feature type="short sequence motif" description="Polymerase core binding">
    <location>
        <begin position="61"/>
        <end position="74"/>
    </location>
</feature>
<dbReference type="EMBL" id="M25260">
    <property type="protein sequence ID" value="AAA22797.1"/>
    <property type="molecule type" value="Genomic_DNA"/>
</dbReference>
<dbReference type="PIR" id="C37165">
    <property type="entry name" value="C37165"/>
</dbReference>
<dbReference type="SMR" id="P26764"/>
<dbReference type="GO" id="GO:0003677">
    <property type="term" value="F:DNA binding"/>
    <property type="evidence" value="ECO:0007669"/>
    <property type="project" value="UniProtKB-KW"/>
</dbReference>
<dbReference type="GO" id="GO:0016987">
    <property type="term" value="F:sigma factor activity"/>
    <property type="evidence" value="ECO:0007669"/>
    <property type="project" value="UniProtKB-KW"/>
</dbReference>
<dbReference type="GO" id="GO:0006352">
    <property type="term" value="P:DNA-templated transcription initiation"/>
    <property type="evidence" value="ECO:0007669"/>
    <property type="project" value="InterPro"/>
</dbReference>
<dbReference type="GO" id="GO:0030435">
    <property type="term" value="P:sporulation resulting in formation of a cellular spore"/>
    <property type="evidence" value="ECO:0007669"/>
    <property type="project" value="UniProtKB-KW"/>
</dbReference>
<dbReference type="CDD" id="cd06171">
    <property type="entry name" value="Sigma70_r4"/>
    <property type="match status" value="1"/>
</dbReference>
<dbReference type="Gene3D" id="1.20.120.1810">
    <property type="match status" value="1"/>
</dbReference>
<dbReference type="Gene3D" id="1.10.10.10">
    <property type="entry name" value="Winged helix-like DNA-binding domain superfamily/Winged helix DNA-binding domain"/>
    <property type="match status" value="2"/>
</dbReference>
<dbReference type="InterPro" id="IPR001387">
    <property type="entry name" value="Cro/C1-type_HTH"/>
</dbReference>
<dbReference type="InterPro" id="IPR014284">
    <property type="entry name" value="RNA_pol_sigma-70_dom"/>
</dbReference>
<dbReference type="InterPro" id="IPR014322">
    <property type="entry name" value="RNA_pol_sigma-B/F/G"/>
</dbReference>
<dbReference type="InterPro" id="IPR014236">
    <property type="entry name" value="RNA_pol_sigma-F"/>
</dbReference>
<dbReference type="InterPro" id="IPR000943">
    <property type="entry name" value="RNA_pol_sigma70"/>
</dbReference>
<dbReference type="InterPro" id="IPR007627">
    <property type="entry name" value="RNA_pol_sigma70_r2"/>
</dbReference>
<dbReference type="InterPro" id="IPR007624">
    <property type="entry name" value="RNA_pol_sigma70_r3"/>
</dbReference>
<dbReference type="InterPro" id="IPR007630">
    <property type="entry name" value="RNA_pol_sigma70_r4"/>
</dbReference>
<dbReference type="InterPro" id="IPR013325">
    <property type="entry name" value="RNA_pol_sigma_r2"/>
</dbReference>
<dbReference type="InterPro" id="IPR013324">
    <property type="entry name" value="RNA_pol_sigma_r3/r4-like"/>
</dbReference>
<dbReference type="InterPro" id="IPR050239">
    <property type="entry name" value="Sigma-70_RNA_pol_init_factors"/>
</dbReference>
<dbReference type="InterPro" id="IPR036388">
    <property type="entry name" value="WH-like_DNA-bd_sf"/>
</dbReference>
<dbReference type="NCBIfam" id="NF004052">
    <property type="entry name" value="PRK05572.1"/>
    <property type="match status" value="1"/>
</dbReference>
<dbReference type="NCBIfam" id="TIGR02980">
    <property type="entry name" value="SigBFG"/>
    <property type="match status" value="1"/>
</dbReference>
<dbReference type="NCBIfam" id="TIGR02937">
    <property type="entry name" value="sigma70-ECF"/>
    <property type="match status" value="1"/>
</dbReference>
<dbReference type="NCBIfam" id="TIGR02885">
    <property type="entry name" value="spore_sigF"/>
    <property type="match status" value="1"/>
</dbReference>
<dbReference type="PANTHER" id="PTHR30603">
    <property type="entry name" value="RNA POLYMERASE SIGMA FACTOR RPO"/>
    <property type="match status" value="1"/>
</dbReference>
<dbReference type="PANTHER" id="PTHR30603:SF19">
    <property type="entry name" value="RNA POLYMERASE SIGMA-F FACTOR"/>
    <property type="match status" value="1"/>
</dbReference>
<dbReference type="Pfam" id="PF04542">
    <property type="entry name" value="Sigma70_r2"/>
    <property type="match status" value="1"/>
</dbReference>
<dbReference type="Pfam" id="PF04539">
    <property type="entry name" value="Sigma70_r3"/>
    <property type="match status" value="1"/>
</dbReference>
<dbReference type="Pfam" id="PF04545">
    <property type="entry name" value="Sigma70_r4"/>
    <property type="match status" value="1"/>
</dbReference>
<dbReference type="PIRSF" id="PIRSF000770">
    <property type="entry name" value="RNA_pol_sigma-SigE/K"/>
    <property type="match status" value="1"/>
</dbReference>
<dbReference type="PRINTS" id="PR00046">
    <property type="entry name" value="SIGMA70FCT"/>
</dbReference>
<dbReference type="SUPFAM" id="SSF88946">
    <property type="entry name" value="Sigma2 domain of RNA polymerase sigma factors"/>
    <property type="match status" value="1"/>
</dbReference>
<dbReference type="SUPFAM" id="SSF88659">
    <property type="entry name" value="Sigma3 and sigma4 domains of RNA polymerase sigma factors"/>
    <property type="match status" value="2"/>
</dbReference>
<dbReference type="PROSITE" id="PS00715">
    <property type="entry name" value="SIGMA70_1"/>
    <property type="match status" value="1"/>
</dbReference>
<dbReference type="PROSITE" id="PS00716">
    <property type="entry name" value="SIGMA70_2"/>
    <property type="match status" value="1"/>
</dbReference>
<reference key="1">
    <citation type="journal article" date="1989" name="J. Gen. Microbiol.">
        <title>Nucleotide sequence of the Bacillus licheniformis homologue of the sporulation locus spoIIA of Bacillus subtilis.</title>
        <authorList>
            <person name="Yudkin M.D."/>
            <person name="Appleby L."/>
            <person name="Smith A.J."/>
        </authorList>
    </citation>
    <scope>NUCLEOTIDE SEQUENCE [GENOMIC DNA]</scope>
    <source>
        <strain>ATCC 9789 / DSM 8785 / NBRC 12195 / NCIMB 6346 / NCTC 6346 / IMET 11025 / NRS 243</strain>
    </source>
</reference>
<protein>
    <recommendedName>
        <fullName>RNA polymerase sigma-F factor</fullName>
    </recommendedName>
    <alternativeName>
        <fullName>Sporulation sigma factor</fullName>
    </alternativeName>
    <alternativeName>
        <fullName>Stage II sporulation protein AC</fullName>
    </alternativeName>
</protein>
<gene>
    <name type="primary">sigF</name>
    <name type="synonym">spoIIAC</name>
</gene>
<sequence>MDVEVKKENQNTQLKDHEVKELIKNSQNGDQKARDLLIEKNMRLVWSVVQRFLNRGYEPDDLFQIGCIGLLKSVDKFDLSYDVRFSTYAVPMIIGEIQRFIRDDGTVKVSRSLKELGNKIRRAKEELSKSNGRIPTVQEIADYLEISSEEVVMAQEAVRSPSSIHETVYENDGDPITLLDQIADQSEEKWFDKIALKEAIKDLDEREKLIVYLRYYKDKTQSEVADRLGISQVQVSRLEKKILKQIKNQMDHFES</sequence>
<accession>P26764</accession>
<proteinExistence type="inferred from homology"/>
<name>RPSF_BACLI</name>
<comment type="function">
    <text>Sigma factors are initiation factors that promote the attachment of RNA polymerase to specific initiation sites and are then released. This sigma factor is responsible for the expression of sporulation specific genes.</text>
</comment>
<comment type="similarity">
    <text evidence="2">Belongs to the sigma-70 factor family.</text>
</comment>
<evidence type="ECO:0000250" key="1"/>
<evidence type="ECO:0000305" key="2"/>
<keyword id="KW-0238">DNA-binding</keyword>
<keyword id="KW-0731">Sigma factor</keyword>
<keyword id="KW-0749">Sporulation</keyword>
<keyword id="KW-0804">Transcription</keyword>
<keyword id="KW-0805">Transcription regulation</keyword>
<organism>
    <name type="scientific">Bacillus licheniformis</name>
    <dbReference type="NCBI Taxonomy" id="1402"/>
    <lineage>
        <taxon>Bacteria</taxon>
        <taxon>Bacillati</taxon>
        <taxon>Bacillota</taxon>
        <taxon>Bacilli</taxon>
        <taxon>Bacillales</taxon>
        <taxon>Bacillaceae</taxon>
        <taxon>Bacillus</taxon>
    </lineage>
</organism>